<reference key="1">
    <citation type="journal article" date="1992" name="Neuron">
        <title>A novel K+ channel with unique localizations in mammalian brain: molecular cloning and characterization.</title>
        <authorList>
            <person name="Hwang P.M."/>
            <person name="Glatt C.E."/>
            <person name="Bredt D.S."/>
            <person name="Yellen G."/>
            <person name="Snyder S.H."/>
        </authorList>
    </citation>
    <scope>NUCLEOTIDE SEQUENCE [MRNA]</scope>
    <scope>FUNCTION</scope>
    <scope>TRANSPORTER ACTIVITY</scope>
    <scope>BIOPHYSICOCHEMICAL PROPERTIES</scope>
    <scope>ACTIVITY REGULATION</scope>
    <scope>SUBCELLULAR LOCATION</scope>
    <scope>TISSUE SPECIFICITY</scope>
    <source>
        <tissue>Brain</tissue>
    </source>
</reference>
<reference key="2">
    <citation type="journal article" date="1997" name="J. Biol. Chem.">
        <title>New modulatory alpha subunits for mammalian Shab K+ channels.</title>
        <authorList>
            <person name="Salinas M."/>
            <person name="Duprat F."/>
            <person name="Heurteaux C."/>
            <person name="Hugnot J.-P."/>
            <person name="Lazdunski M."/>
        </authorList>
    </citation>
    <scope>FUNCTION</scope>
    <scope>TRANSPORTER ACTIVITY</scope>
    <scope>SUBUNIT</scope>
    <scope>SUBCELLULAR LOCATION</scope>
    <source>
        <tissue>Brain</tissue>
    </source>
</reference>
<reference key="3">
    <citation type="journal article" date="1999" name="Ann. N. Y. Acad. Sci.">
        <title>Molecular diversity of K+ channels.</title>
        <authorList>
            <person name="Coetzee W.A."/>
            <person name="Amarillo Y."/>
            <person name="Chiu J."/>
            <person name="Chow A."/>
            <person name="Lau D."/>
            <person name="McCormack T."/>
            <person name="Moreno H."/>
            <person name="Nadal M.S."/>
            <person name="Ozaita A."/>
            <person name="Pountney D."/>
            <person name="Saganich M."/>
            <person name="Vega-Saenz de Miera E."/>
            <person name="Rudy B."/>
        </authorList>
    </citation>
    <scope>REVIEW</scope>
</reference>
<reference key="4">
    <citation type="journal article" date="2000" name="Neuron">
        <title>A novel targeting signal for proximal clustering of the Kv2.1 K+ channel in hippocampal neurons.</title>
        <authorList>
            <person name="Lim S.T."/>
            <person name="Antonucci D.E."/>
            <person name="Scannevin R.H."/>
            <person name="Trimmer J.S."/>
        </authorList>
    </citation>
    <scope>SUBCELLULAR LOCATION</scope>
</reference>
<reference key="5">
    <citation type="journal article" date="2010" name="J. Biol. Chem.">
        <title>Formation of heteromeric Kv2 channels in mammalian brain neurons.</title>
        <authorList>
            <person name="Kihira Y."/>
            <person name="Hermanstyne T.O."/>
            <person name="Misonou H."/>
        </authorList>
    </citation>
    <scope>FUNCTION</scope>
    <scope>TRANSPORTER ACTIVITY</scope>
    <scope>SUBUNIT</scope>
    <scope>INTERACTION WITH KCNB1</scope>
    <scope>SUBCELLULAR LOCATION</scope>
    <scope>PHOSPHORYLATION</scope>
    <scope>TISSUE SPECIFICITY</scope>
    <scope>IDENTIFICATION BY MASS SPECTROMETRY</scope>
</reference>
<reference key="6">
    <citation type="journal article" date="2012" name="Nat. Commun.">
        <title>Quantitative maps of protein phosphorylation sites across 14 different rat organs and tissues.</title>
        <authorList>
            <person name="Lundby A."/>
            <person name="Secher A."/>
            <person name="Lage K."/>
            <person name="Nordsborg N.B."/>
            <person name="Dmytriyev A."/>
            <person name="Lundby C."/>
            <person name="Olsen J.V."/>
        </authorList>
    </citation>
    <scope>PHOSPHORYLATION [LARGE SCALE ANALYSIS] AT SER-448</scope>
    <scope>IDENTIFICATION BY MASS SPECTROMETRY [LARGE SCALE ANALYSIS]</scope>
</reference>
<protein>
    <recommendedName>
        <fullName evidence="14">Potassium voltage-gated channel subfamily B member 2</fullName>
    </recommendedName>
    <alternativeName>
        <fullName evidence="11">CDRK</fullName>
    </alternativeName>
    <alternativeName>
        <fullName>Voltage-gated potassium channel subunit Kv2.2</fullName>
    </alternativeName>
</protein>
<accession>Q63099</accession>
<gene>
    <name evidence="14" type="primary">Kcnb2</name>
</gene>
<comment type="function">
    <text evidence="1 8 9 10">Voltage-gated potassium channel that mediates transmembrane potassium transport in excitable membranes, primarily in the brain and smooth muscle cells (PubMed:1550672). Channels open or close in response to the voltage difference across the membrane, letting potassium ions pass in accordance with their electrochemical gradient. Homotetrameric channels mediate a delayed-rectifier voltage-dependent outward potassium current that display rapid activation and slow inactivation in response to membrane depolarization (PubMed:1550672, PubMed:20202934, PubMed:9305895). Can form functional homotetrameric and heterotetrameric channels that contain variable proportions of KCNB1; channel properties depend on the type of alpha subunits that are part of the channel (PubMed:20202934). Can also form functional heterotetrameric channels with other alpha subunits that are non-conducting when expressed alone, such as KCNS1 and KCNS2, creating a functionally diverse range of channel complexes (PubMed:9305895). In vivo, membranes probably contain a mixture of heteromeric potassium channel complexes, making it difficult to assign currents observed in intact tissues to any particular potassium channel family member. Contributes to the delayed-rectifier voltage-gated potassium current in cortical pyramidal neurons and smooth muscle cells (PubMed:1550672, PubMed:20202934).</text>
</comment>
<comment type="catalytic activity">
    <reaction evidence="8 9 10">
        <text>K(+)(in) = K(+)(out)</text>
        <dbReference type="Rhea" id="RHEA:29463"/>
        <dbReference type="ChEBI" id="CHEBI:29103"/>
    </reaction>
</comment>
<comment type="activity regulation">
    <text evidence="4 8 13">Inhibited by quinine at micromolar levels (By similarity). Modestly sensitive to millimolar levels of tetraethylammonium (TEA) (PubMed:1550672). Modestly sensitive to millimolar levels of 4-aminopyridine (4-AP).</text>
</comment>
<comment type="biophysicochemical properties">
    <kinetics>
        <text evidence="8 13">Homotetrameric channels expressed in xenopus oocytes or in mammalian non-neuronal cells display delayed-rectifier voltage-dependent potassium currents which are activated during membrane depolarization, i.e within a risetime of about 20 msec (PubMed:1550672). After that, inactivate very slowly (PubMed:1550672). Their activation requires low threshold potentials of about -20 to -30 mV, with a midpoint activation at about 10 mV. For inactivation, the voltage at half-maximal amplitude is about -30 mV. Channels have an unitary conductance of about 14 pS. The voltage-dependence of activation and inactivation and other channel characteristics vary depending on the experimental conditions, the expression system and post-translational modifications.</text>
    </kinetics>
</comment>
<comment type="subunit">
    <text evidence="1 3 9 10">Homotetramer or heterotetramer with KCNB1 (PubMed:20202934). Heterotetramer with KCNS1 and KCNS2 (PubMed:9305895). Interacts (via phosphorylated FFAT motif) with VAPA and VAPB (By similarity).</text>
</comment>
<comment type="subcellular location">
    <subcellularLocation>
        <location evidence="7 8 9 10">Cell membrane</location>
        <topology evidence="12">Multi-pass membrane protein</topology>
    </subcellularLocation>
    <subcellularLocation>
        <location evidence="7 9">Perikaryon</location>
    </subcellularLocation>
    <subcellularLocation>
        <location evidence="7 9">Cell projection</location>
        <location evidence="7 9">Dendrite</location>
    </subcellularLocation>
    <text evidence="7 9">Localized uniformly throughout cell bodies and dendrites (PubMed:10719893). Colocalizes with KCNB1 to high-density somatodendritic clusters on cortical pyramidal neurons (PubMed:20202934).</text>
</comment>
<comment type="tissue specificity">
    <text evidence="8 9">Expressed in pyramidal neurons of the cerebral cortex (at protein level) (PubMed:20202934). In the brain, the greatest density occurs in the olfactory bulb, followed by the cerebral cortex, hippocampus, and cerebellum. In peripheral tissues it is most prominent in whole tongue epithelium and circumvallate papillae (PubMed:1550672).</text>
</comment>
<comment type="domain">
    <text evidence="2">The transmembrane segment S4 functions as a voltage-sensor and is characterized by a series of positively charged amino acids at every third position. Channel opening and closing is effected by a conformation change that affects the position and orientation of the voltage-sensor paddle formed by S3 and S4 within the membrane. A transmembrane electric field that is positive inside would push the positively charged S4 segment outwards, thereby opening the pore, while a field that is negative inside would pull the S4 segment inwards and close the pore. Changes in the position and orientation of S4 are then transmitted to the activation gate formed by the inner helix bundle via the S4-S5 linker region.</text>
</comment>
<comment type="PTM">
    <text evidence="3 9">Phosphorylated (PubMed:20202934). Phosphorylation at Ser-608 of the FFAT motif activates interaction with MOSPD2, VAPA and VAPB (By similarity).</text>
</comment>
<comment type="similarity">
    <text evidence="12">Belongs to the potassium channel family. B (Shab) (TC 1.A.1.2) subfamily. Kv2.2/KCNB2 sub-subfamily.</text>
</comment>
<comment type="sequence caution" evidence="12">
    <conflict type="frameshift">
        <sequence resource="EMBL-CDS" id="AAA40905"/>
    </conflict>
</comment>
<evidence type="ECO:0000250" key="1">
    <source>
        <dbReference type="UniProtKB" id="A6H8H5"/>
    </source>
</evidence>
<evidence type="ECO:0000250" key="2">
    <source>
        <dbReference type="UniProtKB" id="P63142"/>
    </source>
</evidence>
<evidence type="ECO:0000250" key="3">
    <source>
        <dbReference type="UniProtKB" id="Q92953"/>
    </source>
</evidence>
<evidence type="ECO:0000250" key="4">
    <source>
        <dbReference type="UniProtKB" id="Q95167"/>
    </source>
</evidence>
<evidence type="ECO:0000255" key="5"/>
<evidence type="ECO:0000256" key="6">
    <source>
        <dbReference type="SAM" id="MobiDB-lite"/>
    </source>
</evidence>
<evidence type="ECO:0000269" key="7">
    <source>
    </source>
</evidence>
<evidence type="ECO:0000269" key="8">
    <source>
    </source>
</evidence>
<evidence type="ECO:0000269" key="9">
    <source>
    </source>
</evidence>
<evidence type="ECO:0000269" key="10">
    <source>
    </source>
</evidence>
<evidence type="ECO:0000303" key="11">
    <source>
    </source>
</evidence>
<evidence type="ECO:0000305" key="12"/>
<evidence type="ECO:0000305" key="13">
    <source>
    </source>
</evidence>
<evidence type="ECO:0000312" key="14">
    <source>
        <dbReference type="RGD" id="621349"/>
    </source>
</evidence>
<evidence type="ECO:0007744" key="15">
    <source>
    </source>
</evidence>
<evidence type="ECO:0007829" key="16">
    <source>
        <dbReference type="PDB" id="6EBK"/>
    </source>
</evidence>
<sequence length="907" mass="102096">MAEKAPPGLNRKTSRSTLSLPPEPVDIIRSKTCSRRVKINVGGLNHEVLWRTLDRLPRTRLGKLRDCNTHESLLEVCDDYNLNENEYFFDRHPGAFTSILNFYRTGKLHMMEEMCALSFGQELDYWGIDEIYLESCCQARYHQKKEQMNEELRREAETMRDGEGEEFDNTCCPEKRKKLWDLLEKPNSSVAAKILAIVSILFIVLSTIALSLNTLPELQENDEFGQPSDNRKLAHVEAVCIAWFTMEYLLRFLSSPNKWKFFKGPLNVIDLLAILPYYVTIFLTESNKSVLQFQNVRRVVQIFRIMRILRILKLARHSTGLQSLGFTLRRSYNELGLLILFLAMGIMIFSSLVFFAEKDEDATKFTSIPASFWWATITMTTVGYGDIYPKTLLGKIVGGLCCIAGVLVIALPIPIIVNNFSEFYKEQKRQEKAIKRREALERAKRNGSIVSMNLKDAFARSMELIDVAVEKAGESANIKDSVDDNHLSPSRWKWARKALSETSSNKSYENKYQEVSQKDSHEQLNNTSSSSPQHLSAQKLEMLYNEITKTQTHSHPNPDCQEQPERPSAYEEEIEMEEVVCPQEQLAVAQTEVIVDMKSTSSIDSFTSCATDFTETERSPLPPPSASHLQMKFPTDLPGMDEHQRVRAPPFLTLSRDKGPAAREAALDYAPIDITVNLDAGASHGPLQPDSASDSPKSSLKGSNPLKSRSLKVNFQENRGSAPQTPPSTARPLPVTTADFPLTTPQHMSTILLEESPPPGTETLPGADVSAHCQGPSKGLSPRVPKQKLFPFSSRERRSFTEIDTGEDEDFLDLQRPRPDKQADPSPNCLADKPGEARDPLREEGCVGSSSPQNTDHNCRQDIYQAVGEVKKDSSQEGYKMENHLFAPEIHSNPGDTGYCPTRETSM</sequence>
<keyword id="KW-0002">3D-structure</keyword>
<keyword id="KW-1003">Cell membrane</keyword>
<keyword id="KW-0966">Cell projection</keyword>
<keyword id="KW-0325">Glycoprotein</keyword>
<keyword id="KW-0407">Ion channel</keyword>
<keyword id="KW-0406">Ion transport</keyword>
<keyword id="KW-0472">Membrane</keyword>
<keyword id="KW-0597">Phosphoprotein</keyword>
<keyword id="KW-0630">Potassium</keyword>
<keyword id="KW-0631">Potassium channel</keyword>
<keyword id="KW-0633">Potassium transport</keyword>
<keyword id="KW-1185">Reference proteome</keyword>
<keyword id="KW-0812">Transmembrane</keyword>
<keyword id="KW-1133">Transmembrane helix</keyword>
<keyword id="KW-0813">Transport</keyword>
<keyword id="KW-0851">Voltage-gated channel</keyword>
<proteinExistence type="evidence at protein level"/>
<feature type="chain" id="PRO_0000054050" description="Potassium voltage-gated channel subfamily B member 2">
    <location>
        <begin position="1"/>
        <end position="907"/>
    </location>
</feature>
<feature type="topological domain" description="Cytoplasmic" evidence="2">
    <location>
        <begin position="1"/>
        <end position="190"/>
    </location>
</feature>
<feature type="transmembrane region" description="Helical; Name=Segment S1" evidence="2">
    <location>
        <begin position="191"/>
        <end position="212"/>
    </location>
</feature>
<feature type="topological domain" description="Extracellular" evidence="2">
    <location>
        <begin position="213"/>
        <end position="232"/>
    </location>
</feature>
<feature type="transmembrane region" description="Helical; Name=Segment S2" evidence="2">
    <location>
        <begin position="233"/>
        <end position="254"/>
    </location>
</feature>
<feature type="topological domain" description="Cytoplasmic" evidence="2">
    <location>
        <begin position="255"/>
        <end position="265"/>
    </location>
</feature>
<feature type="transmembrane region" description="Helical; Name=Segment S3" evidence="2">
    <location>
        <begin position="266"/>
        <end position="284"/>
    </location>
</feature>
<feature type="topological domain" description="Extracellular" evidence="2">
    <location>
        <begin position="285"/>
        <end position="296"/>
    </location>
</feature>
<feature type="transmembrane region" description="Helical; Voltage-sensor; Name=Segment S4" evidence="2">
    <location>
        <begin position="297"/>
        <end position="317"/>
    </location>
</feature>
<feature type="topological domain" description="Cytoplasmic" evidence="2">
    <location>
        <begin position="318"/>
        <end position="332"/>
    </location>
</feature>
<feature type="transmembrane region" description="Helical; Name=Segment S5" evidence="2">
    <location>
        <begin position="333"/>
        <end position="355"/>
    </location>
</feature>
<feature type="topological domain" description="Extracellular" evidence="2">
    <location>
        <begin position="356"/>
        <end position="368"/>
    </location>
</feature>
<feature type="intramembrane region" description="Helical; Name=Pore helix" evidence="2">
    <location>
        <begin position="369"/>
        <end position="380"/>
    </location>
</feature>
<feature type="intramembrane region" evidence="2">
    <location>
        <begin position="381"/>
        <end position="388"/>
    </location>
</feature>
<feature type="topological domain" description="Extracellular" evidence="2">
    <location>
        <begin position="389"/>
        <end position="395"/>
    </location>
</feature>
<feature type="transmembrane region" description="Helical; Name=Segment S6" evidence="2">
    <location>
        <begin position="396"/>
        <end position="424"/>
    </location>
</feature>
<feature type="topological domain" description="Cytoplasmic" evidence="2">
    <location>
        <begin position="425"/>
        <end position="907"/>
    </location>
</feature>
<feature type="region of interest" description="Disordered" evidence="6">
    <location>
        <begin position="1"/>
        <end position="22"/>
    </location>
</feature>
<feature type="region of interest" description="Disordered" evidence="6">
    <location>
        <begin position="503"/>
        <end position="534"/>
    </location>
</feature>
<feature type="region of interest" description="Disordered" evidence="6">
    <location>
        <begin position="550"/>
        <end position="570"/>
    </location>
</feature>
<feature type="region of interest" description="Disordered" evidence="6">
    <location>
        <begin position="680"/>
        <end position="860"/>
    </location>
</feature>
<feature type="region of interest" description="Disordered" evidence="6">
    <location>
        <begin position="884"/>
        <end position="907"/>
    </location>
</feature>
<feature type="short sequence motif" description="Selectivity filter" evidence="2">
    <location>
        <begin position="381"/>
        <end position="386"/>
    </location>
</feature>
<feature type="short sequence motif" description="FFAT" evidence="3">
    <location>
        <begin position="605"/>
        <end position="611"/>
    </location>
</feature>
<feature type="compositionally biased region" description="Basic and acidic residues" evidence="6">
    <location>
        <begin position="508"/>
        <end position="522"/>
    </location>
</feature>
<feature type="compositionally biased region" description="Polar residues" evidence="6">
    <location>
        <begin position="523"/>
        <end position="534"/>
    </location>
</feature>
<feature type="compositionally biased region" description="Polar residues" evidence="6">
    <location>
        <begin position="690"/>
        <end position="723"/>
    </location>
</feature>
<feature type="compositionally biased region" description="Basic and acidic residues" evidence="6">
    <location>
        <begin position="813"/>
        <end position="823"/>
    </location>
</feature>
<feature type="compositionally biased region" description="Basic and acidic residues" evidence="6">
    <location>
        <begin position="833"/>
        <end position="845"/>
    </location>
</feature>
<feature type="modified residue" description="Phosphoserine" evidence="15">
    <location>
        <position position="448"/>
    </location>
</feature>
<feature type="modified residue" description="Phosphoserine" evidence="3">
    <location>
        <position position="608"/>
    </location>
</feature>
<feature type="glycosylation site" description="N-linked (GlcNAc...) asparagine" evidence="5">
    <location>
        <position position="287"/>
    </location>
</feature>
<feature type="helix" evidence="16">
    <location>
        <begin position="278"/>
        <end position="286"/>
    </location>
</feature>
<feature type="turn" evidence="16">
    <location>
        <begin position="293"/>
        <end position="295"/>
    </location>
</feature>
<feature type="helix" evidence="16">
    <location>
        <begin position="298"/>
        <end position="306"/>
    </location>
</feature>
<feature type="helix" evidence="16">
    <location>
        <begin position="307"/>
        <end position="311"/>
    </location>
</feature>
<organism>
    <name type="scientific">Rattus norvegicus</name>
    <name type="common">Rat</name>
    <dbReference type="NCBI Taxonomy" id="10116"/>
    <lineage>
        <taxon>Eukaryota</taxon>
        <taxon>Metazoa</taxon>
        <taxon>Chordata</taxon>
        <taxon>Craniata</taxon>
        <taxon>Vertebrata</taxon>
        <taxon>Euteleostomi</taxon>
        <taxon>Mammalia</taxon>
        <taxon>Eutheria</taxon>
        <taxon>Euarchontoglires</taxon>
        <taxon>Glires</taxon>
        <taxon>Rodentia</taxon>
        <taxon>Myomorpha</taxon>
        <taxon>Muroidea</taxon>
        <taxon>Muridae</taxon>
        <taxon>Murinae</taxon>
        <taxon>Rattus</taxon>
    </lineage>
</organism>
<name>KCNB2_RAT</name>
<dbReference type="EMBL" id="M77482">
    <property type="protein sequence ID" value="AAA40905.1"/>
    <property type="status" value="ALT_FRAME"/>
    <property type="molecule type" value="mRNA"/>
</dbReference>
<dbReference type="PIR" id="JH0595">
    <property type="entry name" value="JH0595"/>
</dbReference>
<dbReference type="PDB" id="6EBK">
    <property type="method" value="EM"/>
    <property type="resolution" value="3.30 A"/>
    <property type="chains" value="B/D/F/H=278-311"/>
</dbReference>
<dbReference type="PDB" id="6EBL">
    <property type="method" value="EM"/>
    <property type="resolution" value="3.00 A"/>
    <property type="chains" value="B/D/F/H=278-311"/>
</dbReference>
<dbReference type="PDB" id="6EBM">
    <property type="method" value="EM"/>
    <property type="resolution" value="4.00 A"/>
    <property type="chains" value="B/D/F/H=278-311"/>
</dbReference>
<dbReference type="PDBsum" id="6EBK"/>
<dbReference type="PDBsum" id="6EBL"/>
<dbReference type="PDBsum" id="6EBM"/>
<dbReference type="SMR" id="Q63099"/>
<dbReference type="CORUM" id="Q63099"/>
<dbReference type="FunCoup" id="Q63099">
    <property type="interactions" value="759"/>
</dbReference>
<dbReference type="STRING" id="10116.ENSRNOP00000050431"/>
<dbReference type="GuidetoPHARMACOLOGY" id="547"/>
<dbReference type="GlyCosmos" id="Q63099">
    <property type="glycosylation" value="1 site, No reported glycans"/>
</dbReference>
<dbReference type="GlyGen" id="Q63099">
    <property type="glycosylation" value="1 site"/>
</dbReference>
<dbReference type="iPTMnet" id="Q63099"/>
<dbReference type="PhosphoSitePlus" id="Q63099"/>
<dbReference type="PaxDb" id="10116-ENSRNOP00000050431"/>
<dbReference type="ABCD" id="Q63099">
    <property type="antibodies" value="3 sequenced antibodies"/>
</dbReference>
<dbReference type="UCSC" id="RGD:621349">
    <property type="organism name" value="rat"/>
</dbReference>
<dbReference type="AGR" id="RGD:621349"/>
<dbReference type="RGD" id="621349">
    <property type="gene designation" value="Kcnb2"/>
</dbReference>
<dbReference type="eggNOG" id="KOG3713">
    <property type="taxonomic scope" value="Eukaryota"/>
</dbReference>
<dbReference type="InParanoid" id="Q63099"/>
<dbReference type="PhylomeDB" id="Q63099"/>
<dbReference type="Reactome" id="R-RNO-1296072">
    <property type="pathway name" value="Voltage gated Potassium channels"/>
</dbReference>
<dbReference type="PRO" id="PR:Q63099"/>
<dbReference type="Proteomes" id="UP000002494">
    <property type="component" value="Unplaced"/>
</dbReference>
<dbReference type="GO" id="GO:0030425">
    <property type="term" value="C:dendrite"/>
    <property type="evidence" value="ECO:0000314"/>
    <property type="project" value="UniProtKB"/>
</dbReference>
<dbReference type="GO" id="GO:0016020">
    <property type="term" value="C:membrane"/>
    <property type="evidence" value="ECO:0000318"/>
    <property type="project" value="GO_Central"/>
</dbReference>
<dbReference type="GO" id="GO:0043025">
    <property type="term" value="C:neuronal cell body"/>
    <property type="evidence" value="ECO:0000314"/>
    <property type="project" value="RGD"/>
</dbReference>
<dbReference type="GO" id="GO:0032809">
    <property type="term" value="C:neuronal cell body membrane"/>
    <property type="evidence" value="ECO:0000314"/>
    <property type="project" value="UniProtKB"/>
</dbReference>
<dbReference type="GO" id="GO:0043204">
    <property type="term" value="C:perikaryon"/>
    <property type="evidence" value="ECO:0007669"/>
    <property type="project" value="UniProtKB-SubCell"/>
</dbReference>
<dbReference type="GO" id="GO:0005886">
    <property type="term" value="C:plasma membrane"/>
    <property type="evidence" value="ECO:0000314"/>
    <property type="project" value="UniProtKB"/>
</dbReference>
<dbReference type="GO" id="GO:0008076">
    <property type="term" value="C:voltage-gated potassium channel complex"/>
    <property type="evidence" value="ECO:0000314"/>
    <property type="project" value="UniProtKB"/>
</dbReference>
<dbReference type="GO" id="GO:0005251">
    <property type="term" value="F:delayed rectifier potassium channel activity"/>
    <property type="evidence" value="ECO:0000314"/>
    <property type="project" value="UniProtKB"/>
</dbReference>
<dbReference type="GO" id="GO:0015459">
    <property type="term" value="F:potassium channel regulator activity"/>
    <property type="evidence" value="ECO:0000318"/>
    <property type="project" value="GO_Central"/>
</dbReference>
<dbReference type="GO" id="GO:0046982">
    <property type="term" value="F:protein heterodimerization activity"/>
    <property type="evidence" value="ECO:0000314"/>
    <property type="project" value="UniProtKB"/>
</dbReference>
<dbReference type="GO" id="GO:0044325">
    <property type="term" value="F:transmembrane transporter binding"/>
    <property type="evidence" value="ECO:0000353"/>
    <property type="project" value="UniProtKB"/>
</dbReference>
<dbReference type="GO" id="GO:0001508">
    <property type="term" value="P:action potential"/>
    <property type="evidence" value="ECO:0000318"/>
    <property type="project" value="GO_Central"/>
</dbReference>
<dbReference type="GO" id="GO:0071805">
    <property type="term" value="P:potassium ion transmembrane transport"/>
    <property type="evidence" value="ECO:0000314"/>
    <property type="project" value="UniProtKB"/>
</dbReference>
<dbReference type="GO" id="GO:0006813">
    <property type="term" value="P:potassium ion transport"/>
    <property type="evidence" value="ECO:0000314"/>
    <property type="project" value="UniProtKB"/>
</dbReference>
<dbReference type="GO" id="GO:0051260">
    <property type="term" value="P:protein homooligomerization"/>
    <property type="evidence" value="ECO:0007669"/>
    <property type="project" value="InterPro"/>
</dbReference>
<dbReference type="GO" id="GO:0072659">
    <property type="term" value="P:protein localization to plasma membrane"/>
    <property type="evidence" value="ECO:0000314"/>
    <property type="project" value="UniProtKB"/>
</dbReference>
<dbReference type="CDD" id="cd18412">
    <property type="entry name" value="BTB_POZ_KCNB2"/>
    <property type="match status" value="1"/>
</dbReference>
<dbReference type="FunFam" id="1.10.287.70:FF:000034">
    <property type="entry name" value="Potassium voltage-gated channel subfamily B member"/>
    <property type="match status" value="1"/>
</dbReference>
<dbReference type="FunFam" id="1.20.120.350:FF:000018">
    <property type="entry name" value="Potassium voltage-gated channel subfamily B member"/>
    <property type="match status" value="1"/>
</dbReference>
<dbReference type="FunFam" id="3.30.710.10:FF:000010">
    <property type="entry name" value="Potassium voltage-gated channel subfamily B member"/>
    <property type="match status" value="1"/>
</dbReference>
<dbReference type="Gene3D" id="1.10.287.70">
    <property type="match status" value="1"/>
</dbReference>
<dbReference type="Gene3D" id="3.30.710.10">
    <property type="entry name" value="Potassium Channel Kv1.1, Chain A"/>
    <property type="match status" value="1"/>
</dbReference>
<dbReference type="Gene3D" id="1.20.120.350">
    <property type="entry name" value="Voltage-gated potassium channels. Chain C"/>
    <property type="match status" value="1"/>
</dbReference>
<dbReference type="InterPro" id="IPR000210">
    <property type="entry name" value="BTB/POZ_dom"/>
</dbReference>
<dbReference type="InterPro" id="IPR005821">
    <property type="entry name" value="Ion_trans_dom"/>
</dbReference>
<dbReference type="InterPro" id="IPR003968">
    <property type="entry name" value="K_chnl_volt-dep_Kv"/>
</dbReference>
<dbReference type="InterPro" id="IPR003973">
    <property type="entry name" value="K_chnl_volt-dep_Kv2"/>
</dbReference>
<dbReference type="InterPro" id="IPR005826">
    <property type="entry name" value="K_chnl_volt-dep_Kv2.2"/>
</dbReference>
<dbReference type="InterPro" id="IPR011333">
    <property type="entry name" value="SKP1/BTB/POZ_sf"/>
</dbReference>
<dbReference type="InterPro" id="IPR003131">
    <property type="entry name" value="T1-type_BTB"/>
</dbReference>
<dbReference type="InterPro" id="IPR028325">
    <property type="entry name" value="VG_K_chnl"/>
</dbReference>
<dbReference type="InterPro" id="IPR027359">
    <property type="entry name" value="Volt_channel_dom_sf"/>
</dbReference>
<dbReference type="PANTHER" id="PTHR11537:SF134">
    <property type="entry name" value="POTASSIUM VOLTAGE-GATED CHANNEL SUBFAMILY B MEMBER 2"/>
    <property type="match status" value="1"/>
</dbReference>
<dbReference type="PANTHER" id="PTHR11537">
    <property type="entry name" value="VOLTAGE-GATED POTASSIUM CHANNEL"/>
    <property type="match status" value="1"/>
</dbReference>
<dbReference type="Pfam" id="PF02214">
    <property type="entry name" value="BTB_2"/>
    <property type="match status" value="1"/>
</dbReference>
<dbReference type="Pfam" id="PF00520">
    <property type="entry name" value="Ion_trans"/>
    <property type="match status" value="1"/>
</dbReference>
<dbReference type="Pfam" id="PF03521">
    <property type="entry name" value="Kv2channel"/>
    <property type="match status" value="1"/>
</dbReference>
<dbReference type="PRINTS" id="PR00169">
    <property type="entry name" value="KCHANNEL"/>
</dbReference>
<dbReference type="PRINTS" id="PR01515">
    <property type="entry name" value="KV22CHANNEL"/>
</dbReference>
<dbReference type="PRINTS" id="PR01491">
    <property type="entry name" value="KVCHANNEL"/>
</dbReference>
<dbReference type="PRINTS" id="PR01495">
    <property type="entry name" value="SHABCHANNEL"/>
</dbReference>
<dbReference type="SMART" id="SM00225">
    <property type="entry name" value="BTB"/>
    <property type="match status" value="1"/>
</dbReference>
<dbReference type="SUPFAM" id="SSF54695">
    <property type="entry name" value="POZ domain"/>
    <property type="match status" value="1"/>
</dbReference>
<dbReference type="SUPFAM" id="SSF81324">
    <property type="entry name" value="Voltage-gated potassium channels"/>
    <property type="match status" value="1"/>
</dbReference>